<feature type="chain" id="PRO_0000258883" description="UPF0301 protein YqgE">
    <location>
        <begin position="1"/>
        <end position="187"/>
    </location>
</feature>
<keyword id="KW-1185">Reference proteome</keyword>
<gene>
    <name evidence="1" type="primary">yqgE</name>
    <name type="ordered locus">SSON_3102</name>
</gene>
<sequence>MNLQHHFLIAMPALQDPIFRRSVVYICEHNTNGAMGIIVNKPLENLKIEGILEKLKITPEPRDESIRLDKPVMLGGPLAEDRGFILHTPPSNFASSIRISDNTVMTTSRDVLETLGTDKQPSDVLVALGYASWEKGQLEQEILDNAWLTAPADLNILFKTPIADRWREAAKLIGVDILTMPGVAGHA</sequence>
<comment type="similarity">
    <text evidence="1">Belongs to the UPF0301 (AlgH) family.</text>
</comment>
<comment type="sequence caution" evidence="2">
    <conflict type="erroneous initiation">
        <sequence resource="EMBL-CDS" id="AAZ89689"/>
    </conflict>
</comment>
<dbReference type="EMBL" id="CP000038">
    <property type="protein sequence ID" value="AAZ89689.1"/>
    <property type="status" value="ALT_INIT"/>
    <property type="molecule type" value="Genomic_DNA"/>
</dbReference>
<dbReference type="RefSeq" id="WP_001053178.1">
    <property type="nucleotide sequence ID" value="NC_007384.1"/>
</dbReference>
<dbReference type="SMR" id="Q3YXS3"/>
<dbReference type="KEGG" id="ssn:SSON_3102"/>
<dbReference type="HOGENOM" id="CLU_057596_1_1_6"/>
<dbReference type="Proteomes" id="UP000002529">
    <property type="component" value="Chromosome"/>
</dbReference>
<dbReference type="GO" id="GO:0005829">
    <property type="term" value="C:cytosol"/>
    <property type="evidence" value="ECO:0007669"/>
    <property type="project" value="TreeGrafter"/>
</dbReference>
<dbReference type="FunFam" id="3.30.70.1300:FF:000001">
    <property type="entry name" value="UPF0301 protein YqgE"/>
    <property type="match status" value="1"/>
</dbReference>
<dbReference type="Gene3D" id="3.40.1740.10">
    <property type="entry name" value="VC0467-like"/>
    <property type="match status" value="1"/>
</dbReference>
<dbReference type="Gene3D" id="3.30.70.1300">
    <property type="entry name" value="VC0467-like domains"/>
    <property type="match status" value="1"/>
</dbReference>
<dbReference type="HAMAP" id="MF_00758">
    <property type="entry name" value="UPF0301"/>
    <property type="match status" value="1"/>
</dbReference>
<dbReference type="InterPro" id="IPR003774">
    <property type="entry name" value="AlgH-like"/>
</dbReference>
<dbReference type="NCBIfam" id="NF001266">
    <property type="entry name" value="PRK00228.1-1"/>
    <property type="match status" value="1"/>
</dbReference>
<dbReference type="PANTHER" id="PTHR30327">
    <property type="entry name" value="UNCHARACTERIZED PROTEIN YQGE"/>
    <property type="match status" value="1"/>
</dbReference>
<dbReference type="PANTHER" id="PTHR30327:SF1">
    <property type="entry name" value="UPF0301 PROTEIN YQGE"/>
    <property type="match status" value="1"/>
</dbReference>
<dbReference type="Pfam" id="PF02622">
    <property type="entry name" value="DUF179"/>
    <property type="match status" value="1"/>
</dbReference>
<dbReference type="SUPFAM" id="SSF143456">
    <property type="entry name" value="VC0467-like"/>
    <property type="match status" value="1"/>
</dbReference>
<evidence type="ECO:0000255" key="1">
    <source>
        <dbReference type="HAMAP-Rule" id="MF_00758"/>
    </source>
</evidence>
<evidence type="ECO:0000305" key="2"/>
<proteinExistence type="inferred from homology"/>
<organism>
    <name type="scientific">Shigella sonnei (strain Ss046)</name>
    <dbReference type="NCBI Taxonomy" id="300269"/>
    <lineage>
        <taxon>Bacteria</taxon>
        <taxon>Pseudomonadati</taxon>
        <taxon>Pseudomonadota</taxon>
        <taxon>Gammaproteobacteria</taxon>
        <taxon>Enterobacterales</taxon>
        <taxon>Enterobacteriaceae</taxon>
        <taxon>Shigella</taxon>
    </lineage>
</organism>
<accession>Q3YXS3</accession>
<reference key="1">
    <citation type="journal article" date="2005" name="Nucleic Acids Res.">
        <title>Genome dynamics and diversity of Shigella species, the etiologic agents of bacillary dysentery.</title>
        <authorList>
            <person name="Yang F."/>
            <person name="Yang J."/>
            <person name="Zhang X."/>
            <person name="Chen L."/>
            <person name="Jiang Y."/>
            <person name="Yan Y."/>
            <person name="Tang X."/>
            <person name="Wang J."/>
            <person name="Xiong Z."/>
            <person name="Dong J."/>
            <person name="Xue Y."/>
            <person name="Zhu Y."/>
            <person name="Xu X."/>
            <person name="Sun L."/>
            <person name="Chen S."/>
            <person name="Nie H."/>
            <person name="Peng J."/>
            <person name="Xu J."/>
            <person name="Wang Y."/>
            <person name="Yuan Z."/>
            <person name="Wen Y."/>
            <person name="Yao Z."/>
            <person name="Shen Y."/>
            <person name="Qiang B."/>
            <person name="Hou Y."/>
            <person name="Yu J."/>
            <person name="Jin Q."/>
        </authorList>
    </citation>
    <scope>NUCLEOTIDE SEQUENCE [LARGE SCALE GENOMIC DNA]</scope>
    <source>
        <strain>Ss046</strain>
    </source>
</reference>
<name>YQGE_SHISS</name>
<protein>
    <recommendedName>
        <fullName evidence="1">UPF0301 protein YqgE</fullName>
    </recommendedName>
</protein>